<reference key="1">
    <citation type="journal article" date="1993" name="J. Biol. Chem.">
        <title>Soluble lactose-binding lectin from rat intestine with two different carbohydrate-binding domains in the same peptide chain.</title>
        <authorList>
            <person name="Oda Y."/>
            <person name="Herrmann J."/>
            <person name="Gitt M."/>
            <person name="Turck C.W."/>
            <person name="Burlingame A.L."/>
            <person name="Barondes S.H."/>
            <person name="Leffler H."/>
        </authorList>
    </citation>
    <scope>NUCLEOTIDE SEQUENCE [MRNA]</scope>
    <source>
        <tissue>Intestine</tissue>
    </source>
</reference>
<reference key="2">
    <citation type="journal article" date="1995" name="FEBS Lett.">
        <title>Purification and characterization of the N-terminal domain of galectin-4 from rat small intestine.</title>
        <authorList>
            <person name="Tardy F."/>
            <person name="Deviller P."/>
            <person name="Louisot P."/>
            <person name="Martin A."/>
        </authorList>
    </citation>
    <scope>PROTEIN SEQUENCE OF 13-37 AND 44-66</scope>
</reference>
<reference key="3">
    <citation type="journal article" date="2012" name="Nat. Commun.">
        <title>Quantitative maps of protein phosphorylation sites across 14 different rat organs and tissues.</title>
        <authorList>
            <person name="Lundby A."/>
            <person name="Secher A."/>
            <person name="Lage K."/>
            <person name="Nordsborg N.B."/>
            <person name="Dmytriyev A."/>
            <person name="Lundby C."/>
            <person name="Olsen J.V."/>
        </authorList>
    </citation>
    <scope>PHOSPHORYLATION [LARGE SCALE ANALYSIS] AT SER-259</scope>
    <scope>IDENTIFICATION BY MASS SPECTROMETRY [LARGE SCALE ANALYSIS]</scope>
</reference>
<comment type="function">
    <text>Galectin that binds lactose and a related range of sugars.</text>
</comment>
<comment type="subunit">
    <text>Monomer.</text>
</comment>
<comment type="tissue specificity">
    <text>Highly expressed in full-length form in small and large intestine and stomach but was not detected in other tissues including lung, liver, kidney and spleen.</text>
</comment>
<comment type="domain">
    <text>Contains two homologous but distinct carbohydrate-binding domains.</text>
</comment>
<dbReference type="EMBL" id="M73553">
    <property type="protein sequence ID" value="AAA41505.1"/>
    <property type="molecule type" value="mRNA"/>
</dbReference>
<dbReference type="PIR" id="A46631">
    <property type="entry name" value="A46631"/>
</dbReference>
<dbReference type="RefSeq" id="NP_037107.1">
    <property type="nucleotide sequence ID" value="NM_012975.2"/>
</dbReference>
<dbReference type="SMR" id="P38552"/>
<dbReference type="FunCoup" id="P38552">
    <property type="interactions" value="78"/>
</dbReference>
<dbReference type="STRING" id="10116.ENSRNOP00000047505"/>
<dbReference type="iPTMnet" id="P38552"/>
<dbReference type="PhosphoSitePlus" id="P38552"/>
<dbReference type="PaxDb" id="10116-ENSRNOP00000047505"/>
<dbReference type="Ensembl" id="ENSRNOT00000041205.3">
    <property type="protein sequence ID" value="ENSRNOP00000047505.2"/>
    <property type="gene ID" value="ENSRNOG00000020338.7"/>
</dbReference>
<dbReference type="GeneID" id="25474"/>
<dbReference type="KEGG" id="rno:25474"/>
<dbReference type="UCSC" id="RGD:3003">
    <property type="organism name" value="rat"/>
</dbReference>
<dbReference type="AGR" id="RGD:3003"/>
<dbReference type="CTD" id="3960"/>
<dbReference type="RGD" id="3003">
    <property type="gene designation" value="Lgals4"/>
</dbReference>
<dbReference type="eggNOG" id="KOG3587">
    <property type="taxonomic scope" value="Eukaryota"/>
</dbReference>
<dbReference type="GeneTree" id="ENSGT00940000160378"/>
<dbReference type="HOGENOM" id="CLU_037794_1_0_1"/>
<dbReference type="InParanoid" id="P38552"/>
<dbReference type="OMA" id="SFVINFM"/>
<dbReference type="OrthoDB" id="6251307at2759"/>
<dbReference type="PRO" id="PR:P38552"/>
<dbReference type="Proteomes" id="UP000002494">
    <property type="component" value="Chromosome 1"/>
</dbReference>
<dbReference type="Bgee" id="ENSRNOG00000020338">
    <property type="expression patterns" value="Expressed in jejunum and 15 other cell types or tissues"/>
</dbReference>
<dbReference type="GO" id="GO:0005615">
    <property type="term" value="C:extracellular space"/>
    <property type="evidence" value="ECO:0000266"/>
    <property type="project" value="RGD"/>
</dbReference>
<dbReference type="GO" id="GO:0030246">
    <property type="term" value="F:carbohydrate binding"/>
    <property type="evidence" value="ECO:0000318"/>
    <property type="project" value="GO_Central"/>
</dbReference>
<dbReference type="GO" id="GO:0016936">
    <property type="term" value="F:galactoside binding"/>
    <property type="evidence" value="ECO:0000266"/>
    <property type="project" value="RGD"/>
</dbReference>
<dbReference type="GO" id="GO:0002780">
    <property type="term" value="P:antibacterial peptide biosynthetic process"/>
    <property type="evidence" value="ECO:0000266"/>
    <property type="project" value="RGD"/>
</dbReference>
<dbReference type="GO" id="GO:0042742">
    <property type="term" value="P:defense response to bacterium"/>
    <property type="evidence" value="ECO:0000266"/>
    <property type="project" value="RGD"/>
</dbReference>
<dbReference type="CDD" id="cd00070">
    <property type="entry name" value="GLECT"/>
    <property type="match status" value="2"/>
</dbReference>
<dbReference type="FunFam" id="2.60.120.200:FF:000124">
    <property type="entry name" value="Galectin-4"/>
    <property type="match status" value="2"/>
</dbReference>
<dbReference type="Gene3D" id="2.60.120.200">
    <property type="match status" value="2"/>
</dbReference>
<dbReference type="InterPro" id="IPR013320">
    <property type="entry name" value="ConA-like_dom_sf"/>
</dbReference>
<dbReference type="InterPro" id="IPR044156">
    <property type="entry name" value="Galectin-like"/>
</dbReference>
<dbReference type="InterPro" id="IPR001079">
    <property type="entry name" value="Galectin_CRD"/>
</dbReference>
<dbReference type="PANTHER" id="PTHR11346">
    <property type="entry name" value="GALECTIN"/>
    <property type="match status" value="1"/>
</dbReference>
<dbReference type="PANTHER" id="PTHR11346:SF32">
    <property type="entry name" value="GALECTIN-4"/>
    <property type="match status" value="1"/>
</dbReference>
<dbReference type="Pfam" id="PF00337">
    <property type="entry name" value="Gal-bind_lectin"/>
    <property type="match status" value="2"/>
</dbReference>
<dbReference type="SMART" id="SM00908">
    <property type="entry name" value="Gal-bind_lectin"/>
    <property type="match status" value="2"/>
</dbReference>
<dbReference type="SMART" id="SM00276">
    <property type="entry name" value="GLECT"/>
    <property type="match status" value="2"/>
</dbReference>
<dbReference type="SUPFAM" id="SSF49899">
    <property type="entry name" value="Concanavalin A-like lectins/glucanases"/>
    <property type="match status" value="2"/>
</dbReference>
<dbReference type="PROSITE" id="PS51304">
    <property type="entry name" value="GALECTIN"/>
    <property type="match status" value="2"/>
</dbReference>
<sequence length="324" mass="36347">MAYVPAPGYQPTYNPTLPYKRPIPGGLSVGMSIYIQGIAKDNMRRFHVNFAVGQDEGADIAFHFNPRFDGWDKVVFNTMQSGQWGKEEKKKSMPFQKGHHFELVFMVMSEHYKVVVNGTPFYEYGHRLPLQMVTHLQVDGDLELQSINFLGGQPAASQYPGTMTIPAYPSAGYNPPQMNSLPVMAGPPIFNPPVPYVGTLQGGLTARRTIIIKGYVLPTAKNLIINFKVGSTGDIAFHMNPRIGDCVVRNSYMNGSWGSEERKIPYNPFGAGQFFDLSIRCGTDRFKVFANGQHLFDFSHRFQAFQRVDMLEIKGDITLSYVQI</sequence>
<gene>
    <name type="primary">Lgals4</name>
</gene>
<protein>
    <recommendedName>
        <fullName>Galectin-4</fullName>
        <shortName>Gal-4</shortName>
    </recommendedName>
    <alternativeName>
        <fullName>L-36 lactose-binding protein</fullName>
        <shortName>L36LBP</shortName>
    </alternativeName>
    <alternativeName>
        <fullName>Lactose-binding lectin 4</fullName>
    </alternativeName>
</protein>
<name>LEG4_RAT</name>
<accession>P38552</accession>
<organism>
    <name type="scientific">Rattus norvegicus</name>
    <name type="common">Rat</name>
    <dbReference type="NCBI Taxonomy" id="10116"/>
    <lineage>
        <taxon>Eukaryota</taxon>
        <taxon>Metazoa</taxon>
        <taxon>Chordata</taxon>
        <taxon>Craniata</taxon>
        <taxon>Vertebrata</taxon>
        <taxon>Euteleostomi</taxon>
        <taxon>Mammalia</taxon>
        <taxon>Eutheria</taxon>
        <taxon>Euarchontoglires</taxon>
        <taxon>Glires</taxon>
        <taxon>Rodentia</taxon>
        <taxon>Myomorpha</taxon>
        <taxon>Muroidea</taxon>
        <taxon>Muridae</taxon>
        <taxon>Murinae</taxon>
        <taxon>Rattus</taxon>
    </lineage>
</organism>
<feature type="chain" id="PRO_0000076937" description="Galectin-4">
    <location>
        <begin position="1"/>
        <end position="324"/>
    </location>
</feature>
<feature type="domain" description="Galectin 1" evidence="2">
    <location>
        <begin position="19"/>
        <end position="150"/>
    </location>
</feature>
<feature type="domain" description="Galectin 2" evidence="2">
    <location>
        <begin position="196"/>
        <end position="324"/>
    </location>
</feature>
<feature type="binding site" evidence="1">
    <location>
        <begin position="257"/>
        <end position="263"/>
    </location>
    <ligand>
        <name>a beta-D-galactoside</name>
        <dbReference type="ChEBI" id="CHEBI:28034"/>
    </ligand>
</feature>
<feature type="modified residue" description="Phosphoserine" evidence="3">
    <location>
        <position position="259"/>
    </location>
</feature>
<evidence type="ECO:0000250" key="1"/>
<evidence type="ECO:0000255" key="2">
    <source>
        <dbReference type="PROSITE-ProRule" id="PRU00639"/>
    </source>
</evidence>
<evidence type="ECO:0007744" key="3">
    <source>
    </source>
</evidence>
<keyword id="KW-0903">Direct protein sequencing</keyword>
<keyword id="KW-0430">Lectin</keyword>
<keyword id="KW-0597">Phosphoprotein</keyword>
<keyword id="KW-1185">Reference proteome</keyword>
<keyword id="KW-0677">Repeat</keyword>
<proteinExistence type="evidence at protein level"/>